<sequence>MACNFAVRVIYYPKEIHGVSVLNTNRSRKSRFSCRVMKLSTGVSAVAANPVRTSEERVYEVVLKQAALVREEKRSSRGLCLDTKRTGSKSFDKSENDDAGMKSWNLLNEAYDRCGEVCAEYAKTFYLGTLLMTPERRRAVWAIYVWCRRTDELVDGPNASHITPKALDRWEKRLNDLFDGQPYDMYDAALADTVSTYPVDIQPFKDMIDGMRMDLKKSRYQTFDELYLYCYYVAGTVGLMSVPVMGIAPESKATTESVYSAALALGIANQLTNILRDVGEDARRGRIYLPQEELKLAGITPEYIFKGKVTDKWRSFMKGQIKRARMFFDEAEKGVAELSSASRWPVWASLLLYKQILDAIEANDYDNFTKRAYVGKAKKLVSLPLAYSRALFAPSTVR</sequence>
<proteinExistence type="evidence at transcript level"/>
<gene>
    <name type="primary">PSY</name>
</gene>
<dbReference type="EC" id="2.5.1.32"/>
<dbReference type="EMBL" id="AB032797">
    <property type="protein sequence ID" value="BAA84763.1"/>
    <property type="molecule type" value="mRNA"/>
</dbReference>
<dbReference type="SMR" id="Q9SSU8"/>
<dbReference type="OMA" id="LMTPQRQ"/>
<dbReference type="UniPathway" id="UPA00799">
    <property type="reaction ID" value="UER00773"/>
</dbReference>
<dbReference type="GO" id="GO:0009507">
    <property type="term" value="C:chloroplast"/>
    <property type="evidence" value="ECO:0007669"/>
    <property type="project" value="UniProtKB-SubCell"/>
</dbReference>
<dbReference type="GO" id="GO:0046905">
    <property type="term" value="F:15-cis-phytoene synthase activity"/>
    <property type="evidence" value="ECO:0007669"/>
    <property type="project" value="RHEA"/>
</dbReference>
<dbReference type="GO" id="GO:0004311">
    <property type="term" value="F:geranylgeranyl diphosphate synthase activity"/>
    <property type="evidence" value="ECO:0007669"/>
    <property type="project" value="InterPro"/>
</dbReference>
<dbReference type="GO" id="GO:0051996">
    <property type="term" value="F:squalene synthase [NAD(P)H] activity"/>
    <property type="evidence" value="ECO:0007669"/>
    <property type="project" value="InterPro"/>
</dbReference>
<dbReference type="GO" id="GO:0016117">
    <property type="term" value="P:carotenoid biosynthetic process"/>
    <property type="evidence" value="ECO:0007669"/>
    <property type="project" value="UniProtKB-KW"/>
</dbReference>
<dbReference type="CDD" id="cd00683">
    <property type="entry name" value="Trans_IPPS_HH"/>
    <property type="match status" value="1"/>
</dbReference>
<dbReference type="FunFam" id="1.10.600.10:FF:000004">
    <property type="entry name" value="Phytoene synthase chloroplastic"/>
    <property type="match status" value="1"/>
</dbReference>
<dbReference type="Gene3D" id="1.10.600.10">
    <property type="entry name" value="Farnesyl Diphosphate Synthase"/>
    <property type="match status" value="1"/>
</dbReference>
<dbReference type="InterPro" id="IPR008949">
    <property type="entry name" value="Isoprenoid_synthase_dom_sf"/>
</dbReference>
<dbReference type="InterPro" id="IPR002060">
    <property type="entry name" value="Squ/phyt_synthse"/>
</dbReference>
<dbReference type="InterPro" id="IPR019845">
    <property type="entry name" value="Squalene/phytoene_synthase_CS"/>
</dbReference>
<dbReference type="InterPro" id="IPR044843">
    <property type="entry name" value="Trans_IPPS_bact-type"/>
</dbReference>
<dbReference type="InterPro" id="IPR033904">
    <property type="entry name" value="Trans_IPPS_HH"/>
</dbReference>
<dbReference type="PANTHER" id="PTHR31480">
    <property type="entry name" value="BIFUNCTIONAL LYCOPENE CYCLASE/PHYTOENE SYNTHASE"/>
    <property type="match status" value="1"/>
</dbReference>
<dbReference type="Pfam" id="PF00494">
    <property type="entry name" value="SQS_PSY"/>
    <property type="match status" value="1"/>
</dbReference>
<dbReference type="SFLD" id="SFLDS00005">
    <property type="entry name" value="Isoprenoid_Synthase_Type_I"/>
    <property type="match status" value="1"/>
</dbReference>
<dbReference type="SFLD" id="SFLDG01212">
    <property type="entry name" value="Phytoene_synthase_like"/>
    <property type="match status" value="1"/>
</dbReference>
<dbReference type="SUPFAM" id="SSF48576">
    <property type="entry name" value="Terpenoid synthases"/>
    <property type="match status" value="1"/>
</dbReference>
<dbReference type="PROSITE" id="PS01044">
    <property type="entry name" value="SQUALEN_PHYTOEN_SYN_1"/>
    <property type="match status" value="1"/>
</dbReference>
<dbReference type="PROSITE" id="PS01045">
    <property type="entry name" value="SQUALEN_PHYTOEN_SYN_2"/>
    <property type="match status" value="1"/>
</dbReference>
<name>PSY_DAUCA</name>
<keyword id="KW-0125">Carotenoid biosynthesis</keyword>
<keyword id="KW-0150">Chloroplast</keyword>
<keyword id="KW-0414">Isoprene biosynthesis</keyword>
<keyword id="KW-0934">Plastid</keyword>
<keyword id="KW-0808">Transferase</keyword>
<keyword id="KW-0809">Transit peptide</keyword>
<protein>
    <recommendedName>
        <fullName>Phytoene synthase, chloroplastic</fullName>
        <ecNumber>2.5.1.32</ecNumber>
    </recommendedName>
</protein>
<reference key="1">
    <citation type="submission" date="1999-09" db="EMBL/GenBank/DDBJ databases">
        <title>Daucus carota phytoene synthase.</title>
        <authorList>
            <person name="Uno T."/>
            <person name="Sankawa U."/>
        </authorList>
    </citation>
    <scope>NUCLEOTIDE SEQUENCE [MRNA]</scope>
    <source>
        <tissue>Root</tissue>
    </source>
</reference>
<evidence type="ECO:0000250" key="1"/>
<evidence type="ECO:0000255" key="2"/>
<evidence type="ECO:0000305" key="3"/>
<accession>Q9SSU8</accession>
<organism>
    <name type="scientific">Daucus carota</name>
    <name type="common">Wild carrot</name>
    <dbReference type="NCBI Taxonomy" id="4039"/>
    <lineage>
        <taxon>Eukaryota</taxon>
        <taxon>Viridiplantae</taxon>
        <taxon>Streptophyta</taxon>
        <taxon>Embryophyta</taxon>
        <taxon>Tracheophyta</taxon>
        <taxon>Spermatophyta</taxon>
        <taxon>Magnoliopsida</taxon>
        <taxon>eudicotyledons</taxon>
        <taxon>Gunneridae</taxon>
        <taxon>Pentapetalae</taxon>
        <taxon>asterids</taxon>
        <taxon>campanulids</taxon>
        <taxon>Apiales</taxon>
        <taxon>Apiaceae</taxon>
        <taxon>Apioideae</taxon>
        <taxon>Scandiceae</taxon>
        <taxon>Daucinae</taxon>
        <taxon>Daucus</taxon>
        <taxon>Daucus sect. Daucus</taxon>
    </lineage>
</organism>
<comment type="function">
    <text>Catalyzes the reaction from prephytoene diphosphate to phytoene.</text>
</comment>
<comment type="catalytic activity">
    <reaction>
        <text>2 (2E,6E,10E)-geranylgeranyl diphosphate = 15-cis-phytoene + 2 diphosphate</text>
        <dbReference type="Rhea" id="RHEA:34475"/>
        <dbReference type="ChEBI" id="CHEBI:27787"/>
        <dbReference type="ChEBI" id="CHEBI:33019"/>
        <dbReference type="ChEBI" id="CHEBI:58756"/>
        <dbReference type="EC" id="2.5.1.32"/>
    </reaction>
</comment>
<comment type="pathway">
    <text>Carotenoid biosynthesis; phytoene biosynthesis; all-trans-phytoene from geranylgeranyl diphosphate: step 1/1.</text>
</comment>
<comment type="subunit">
    <text evidence="1">Monomer.</text>
</comment>
<comment type="subcellular location">
    <subcellularLocation>
        <location>Plastid</location>
        <location>Chloroplast</location>
    </subcellularLocation>
</comment>
<comment type="similarity">
    <text evidence="3">Belongs to the phytoene/squalene synthase family.</text>
</comment>
<feature type="transit peptide" description="Chloroplast" evidence="2">
    <location>
        <begin position="1"/>
        <end status="unknown"/>
    </location>
</feature>
<feature type="chain" id="PRO_0000029855" description="Phytoene synthase, chloroplastic">
    <location>
        <begin status="unknown"/>
        <end position="398"/>
    </location>
</feature>